<dbReference type="EC" id="1.15.1.1"/>
<dbReference type="EMBL" id="U78908">
    <property type="protein sequence ID" value="AAB60932.1"/>
    <property type="molecule type" value="Genomic_DNA"/>
</dbReference>
<dbReference type="PIR" id="T44916">
    <property type="entry name" value="T44916"/>
</dbReference>
<dbReference type="SMR" id="O08461"/>
<dbReference type="GO" id="GO:0046872">
    <property type="term" value="F:metal ion binding"/>
    <property type="evidence" value="ECO:0007669"/>
    <property type="project" value="UniProtKB-KW"/>
</dbReference>
<dbReference type="GO" id="GO:0004784">
    <property type="term" value="F:superoxide dismutase activity"/>
    <property type="evidence" value="ECO:0007669"/>
    <property type="project" value="UniProtKB-EC"/>
</dbReference>
<dbReference type="Gene3D" id="1.10.287.990">
    <property type="entry name" value="Fe,Mn superoxide dismutase (SOD) domain"/>
    <property type="match status" value="1"/>
</dbReference>
<dbReference type="Gene3D" id="3.55.40.20">
    <property type="entry name" value="Iron/manganese superoxide dismutase, C-terminal domain"/>
    <property type="match status" value="1"/>
</dbReference>
<dbReference type="InterPro" id="IPR050265">
    <property type="entry name" value="Fe/Mn_Superoxide_Dismutase"/>
</dbReference>
<dbReference type="InterPro" id="IPR001189">
    <property type="entry name" value="Mn/Fe_SOD"/>
</dbReference>
<dbReference type="InterPro" id="IPR019833">
    <property type="entry name" value="Mn/Fe_SOD_BS"/>
</dbReference>
<dbReference type="InterPro" id="IPR019832">
    <property type="entry name" value="Mn/Fe_SOD_C"/>
</dbReference>
<dbReference type="InterPro" id="IPR019831">
    <property type="entry name" value="Mn/Fe_SOD_N"/>
</dbReference>
<dbReference type="InterPro" id="IPR036324">
    <property type="entry name" value="Mn/Fe_SOD_N_sf"/>
</dbReference>
<dbReference type="InterPro" id="IPR036314">
    <property type="entry name" value="SOD_C_sf"/>
</dbReference>
<dbReference type="PANTHER" id="PTHR11404">
    <property type="entry name" value="SUPEROXIDE DISMUTASE 2"/>
    <property type="match status" value="1"/>
</dbReference>
<dbReference type="PANTHER" id="PTHR11404:SF6">
    <property type="entry name" value="SUPEROXIDE DISMUTASE [MN], MITOCHONDRIAL"/>
    <property type="match status" value="1"/>
</dbReference>
<dbReference type="Pfam" id="PF02777">
    <property type="entry name" value="Sod_Fe_C"/>
    <property type="match status" value="1"/>
</dbReference>
<dbReference type="Pfam" id="PF00081">
    <property type="entry name" value="Sod_Fe_N"/>
    <property type="match status" value="1"/>
</dbReference>
<dbReference type="PRINTS" id="PR01703">
    <property type="entry name" value="MNSODISMTASE"/>
</dbReference>
<dbReference type="SUPFAM" id="SSF54719">
    <property type="entry name" value="Fe,Mn superoxide dismutase (SOD), C-terminal domain"/>
    <property type="match status" value="1"/>
</dbReference>
<dbReference type="SUPFAM" id="SSF46609">
    <property type="entry name" value="Fe,Mn superoxide dismutase (SOD), N-terminal domain"/>
    <property type="match status" value="1"/>
</dbReference>
<dbReference type="PROSITE" id="PS00088">
    <property type="entry name" value="SOD_MN"/>
    <property type="match status" value="1"/>
</dbReference>
<sequence length="144" mass="15613">GYVNGWNAAEETLEANREAGEFDSSAGAIRNVTHNGCGHILHDLFWQNMSPEGGDEPAGALADRIAEDFGSYDAWKGEFEAAAGAAGGWALLVYDSFSNQLRNVVVDKHDQGALWGSHPILALDVWEHSYYHDYGPARGDFISA</sequence>
<keyword id="KW-0464">Manganese</keyword>
<keyword id="KW-0479">Metal-binding</keyword>
<keyword id="KW-0560">Oxidoreductase</keyword>
<protein>
    <recommendedName>
        <fullName>Superoxide dismutase [Mn] 1</fullName>
        <ecNumber>1.15.1.1</ecNumber>
    </recommendedName>
</protein>
<organism>
    <name type="scientific">Haloferax mediterranei</name>
    <name type="common">Halobacterium mediterranei</name>
    <dbReference type="NCBI Taxonomy" id="2252"/>
    <lineage>
        <taxon>Archaea</taxon>
        <taxon>Methanobacteriati</taxon>
        <taxon>Methanobacteriota</taxon>
        <taxon>Stenosarchaea group</taxon>
        <taxon>Halobacteria</taxon>
        <taxon>Halobacteriales</taxon>
        <taxon>Haloferacaceae</taxon>
        <taxon>Haloferax</taxon>
    </lineage>
</organism>
<evidence type="ECO:0000250" key="1"/>
<evidence type="ECO:0000305" key="2"/>
<gene>
    <name type="primary">sod1</name>
</gene>
<proteinExistence type="inferred from homology"/>
<name>SODM1_HALME</name>
<accession>O08461</accession>
<feature type="chain" id="PRO_0000160119" description="Superoxide dismutase [Mn] 1">
    <location>
        <begin position="1" status="less than"/>
        <end position="144" status="greater than"/>
    </location>
</feature>
<feature type="binding site" evidence="1">
    <location>
        <position position="42"/>
    </location>
    <ligand>
        <name>Mn(2+)</name>
        <dbReference type="ChEBI" id="CHEBI:29035"/>
    </ligand>
</feature>
<feature type="binding site" evidence="1">
    <location>
        <position position="124"/>
    </location>
    <ligand>
        <name>Mn(2+)</name>
        <dbReference type="ChEBI" id="CHEBI:29035"/>
    </ligand>
</feature>
<feature type="binding site" evidence="1">
    <location>
        <position position="128"/>
    </location>
    <ligand>
        <name>Mn(2+)</name>
        <dbReference type="ChEBI" id="CHEBI:29035"/>
    </ligand>
</feature>
<feature type="non-terminal residue">
    <location>
        <position position="1"/>
    </location>
</feature>
<feature type="non-terminal residue">
    <location>
        <position position="144"/>
    </location>
</feature>
<comment type="function">
    <text>Destroys superoxide anion radicals which are normally produced within the cells and which are toxic to biological systems.</text>
</comment>
<comment type="catalytic activity">
    <reaction>
        <text>2 superoxide + 2 H(+) = H2O2 + O2</text>
        <dbReference type="Rhea" id="RHEA:20696"/>
        <dbReference type="ChEBI" id="CHEBI:15378"/>
        <dbReference type="ChEBI" id="CHEBI:15379"/>
        <dbReference type="ChEBI" id="CHEBI:16240"/>
        <dbReference type="ChEBI" id="CHEBI:18421"/>
        <dbReference type="EC" id="1.15.1.1"/>
    </reaction>
</comment>
<comment type="cofactor">
    <cofactor evidence="1">
        <name>Mn(2+)</name>
        <dbReference type="ChEBI" id="CHEBI:29035"/>
    </cofactor>
    <text evidence="1">Binds 1 Mn(2+) ion per subunit.</text>
</comment>
<comment type="similarity">
    <text evidence="2">Belongs to the iron/manganese superoxide dismutase family.</text>
</comment>
<reference key="1">
    <citation type="journal article" date="1997" name="Microbiol. Mol. Biol. Rev.">
        <title>Evolutionary divergence and salinity-mediated selection in halophilic archaea.</title>
        <authorList>
            <person name="Dennis P.P."/>
            <person name="Shimmin L.C."/>
        </authorList>
    </citation>
    <scope>NUCLEOTIDE SEQUENCE [GENOMIC DNA]</scope>
</reference>